<keyword id="KW-0732">Signal</keyword>
<organism>
    <name type="scientific">Staphylococcus aureus (strain bovine RF122 / ET3-1)</name>
    <dbReference type="NCBI Taxonomy" id="273036"/>
    <lineage>
        <taxon>Bacteria</taxon>
        <taxon>Bacillati</taxon>
        <taxon>Bacillota</taxon>
        <taxon>Bacilli</taxon>
        <taxon>Bacillales</taxon>
        <taxon>Staphylococcaceae</taxon>
        <taxon>Staphylococcus</taxon>
    </lineage>
</organism>
<proteinExistence type="inferred from homology"/>
<dbReference type="EMBL" id="AJ938182">
    <property type="protein sequence ID" value="CAI80434.1"/>
    <property type="molecule type" value="Genomic_DNA"/>
</dbReference>
<dbReference type="RefSeq" id="WP_000727728.1">
    <property type="nucleotide sequence ID" value="NC_007622.1"/>
</dbReference>
<dbReference type="KEGG" id="sab:SAB0746"/>
<dbReference type="HOGENOM" id="CLU_078520_0_0_9"/>
<dbReference type="GO" id="GO:0009986">
    <property type="term" value="C:cell surface"/>
    <property type="evidence" value="ECO:0007669"/>
    <property type="project" value="UniProtKB-SubCell"/>
</dbReference>
<comment type="function">
    <text evidence="1">Adhesin that binds to the host cell extracellular matrix proteins fibronectin, fibrinogen, collagen, and vitronectin.</text>
</comment>
<comment type="subcellular location">
    <subcellularLocation>
        <location evidence="1">Cell surface</location>
    </subcellularLocation>
</comment>
<name>EMP_STAAB</name>
<evidence type="ECO:0000250" key="1"/>
<gene>
    <name type="primary">emp</name>
    <name type="ordered locus">SAB0746</name>
</gene>
<accession>Q2YWL4</accession>
<reference key="1">
    <citation type="journal article" date="2007" name="PLoS ONE">
        <title>Molecular correlates of host specialization in Staphylococcus aureus.</title>
        <authorList>
            <person name="Herron-Olson L."/>
            <person name="Fitzgerald J.R."/>
            <person name="Musser J.M."/>
            <person name="Kapur V."/>
        </authorList>
    </citation>
    <scope>NUCLEOTIDE SEQUENCE [LARGE SCALE GENOMIC DNA]</scope>
    <source>
        <strain>bovine RF122 / ET3-1</strain>
    </source>
</reference>
<sequence>MKKKLFVLTMSTLFATQLINSNHANASTESVDKNFVVPESGINKIIPTYDEFKKAPKVNVGSLADNKNFVASEDKLSKIADPSAASKIVDKNFVVPESKLGNIVPEYKEINNRVNVATNNPASQQVDKHFVAKGPEVNRFITQNKVNHPFITTQTHYKKVITSYKSTHVHKHVNHATGSINKHFIVKPSEAPRYTQPSQSLMINHYFAVPGYHAHKFVTPGHASIKINHFCVVPQINSFKVIPPYGHNSHRMHVPSFQNNTTATHQNAKVKKAYDYKYFYSYKVVKGVKKYFSFSQSNGYKIGEPSLNIKNVNYQYAVPSYSPTHYVPEFKGSIPAPRV</sequence>
<protein>
    <recommendedName>
        <fullName>Extracellular matrix protein-binding protein emp</fullName>
    </recommendedName>
</protein>
<feature type="signal peptide" evidence="1">
    <location>
        <begin position="1"/>
        <end position="26"/>
    </location>
</feature>
<feature type="chain" id="PRO_0000271535" description="Extracellular matrix protein-binding protein emp">
    <location>
        <begin position="27"/>
        <end position="339"/>
    </location>
</feature>